<sequence length="465" mass="51311">MATGKIIQIIGAVVDVEFNQDSVPKIYNALEVKNKQYKLILEVQQQLGSGVVRTIAMGSSNGLKRGLIVTDLGHYIKVPVGEATLGRIINVLGETIDNKGALKNNQSDKIEYWEIHRSPPSYRDQASCREILETGIKVIDLICPFSKGGKVGLFGGAGVGKTVNMMELIRNIAVEHSGYSVFTGVGERTREGNDFYHEMNDSQVLDKVSLVYGQMNEPPGNRLRVAFTGLTIAEKFRDEGKDVLLFIDNIYRYTLAGTEVSALLGRMPSAVGYQPTLAEEMGLLQERITSTKNGSITSVQAVYVPADDLTDPSPATTFAHLDSTVTLSRQIASLGIYPAIDPLNSTSRQLDPYIVGDEHYETALGVQSILQRYQELKDIIAILGMDELAEKDKLLVSRARKIQRFLSQPFFVAEVFTGFPGKYVSLKDNIRAFKGIIKGEFDDLPEQAFYMVGSIEEVIEKAKKL</sequence>
<dbReference type="EC" id="7.1.2.2" evidence="1"/>
<dbReference type="EMBL" id="CP001158">
    <property type="protein sequence ID" value="ACL29842.1"/>
    <property type="molecule type" value="Genomic_DNA"/>
</dbReference>
<dbReference type="RefSeq" id="WP_009873970.1">
    <property type="nucleotide sequence ID" value="NC_011834.1"/>
</dbReference>
<dbReference type="SMR" id="B8D6S7"/>
<dbReference type="KEGG" id="bau:BUAPTUC7_008"/>
<dbReference type="HOGENOM" id="CLU_022398_0_2_6"/>
<dbReference type="GO" id="GO:0005886">
    <property type="term" value="C:plasma membrane"/>
    <property type="evidence" value="ECO:0007669"/>
    <property type="project" value="UniProtKB-SubCell"/>
</dbReference>
<dbReference type="GO" id="GO:0045259">
    <property type="term" value="C:proton-transporting ATP synthase complex"/>
    <property type="evidence" value="ECO:0007669"/>
    <property type="project" value="UniProtKB-KW"/>
</dbReference>
<dbReference type="GO" id="GO:0005524">
    <property type="term" value="F:ATP binding"/>
    <property type="evidence" value="ECO:0007669"/>
    <property type="project" value="UniProtKB-UniRule"/>
</dbReference>
<dbReference type="GO" id="GO:0016887">
    <property type="term" value="F:ATP hydrolysis activity"/>
    <property type="evidence" value="ECO:0007669"/>
    <property type="project" value="InterPro"/>
</dbReference>
<dbReference type="GO" id="GO:0046933">
    <property type="term" value="F:proton-transporting ATP synthase activity, rotational mechanism"/>
    <property type="evidence" value="ECO:0007669"/>
    <property type="project" value="UniProtKB-UniRule"/>
</dbReference>
<dbReference type="CDD" id="cd18110">
    <property type="entry name" value="ATP-synt_F1_beta_C"/>
    <property type="match status" value="1"/>
</dbReference>
<dbReference type="CDD" id="cd18115">
    <property type="entry name" value="ATP-synt_F1_beta_N"/>
    <property type="match status" value="1"/>
</dbReference>
<dbReference type="CDD" id="cd01133">
    <property type="entry name" value="F1-ATPase_beta_CD"/>
    <property type="match status" value="1"/>
</dbReference>
<dbReference type="FunFam" id="1.10.1140.10:FF:000001">
    <property type="entry name" value="ATP synthase subunit beta"/>
    <property type="match status" value="1"/>
</dbReference>
<dbReference type="FunFam" id="2.40.10.170:FF:000003">
    <property type="entry name" value="ATP synthase subunit beta"/>
    <property type="match status" value="1"/>
</dbReference>
<dbReference type="FunFam" id="3.40.50.300:FF:000004">
    <property type="entry name" value="ATP synthase subunit beta"/>
    <property type="match status" value="1"/>
</dbReference>
<dbReference type="Gene3D" id="2.40.10.170">
    <property type="match status" value="1"/>
</dbReference>
<dbReference type="Gene3D" id="1.10.1140.10">
    <property type="entry name" value="Bovine Mitochondrial F1-atpase, Atp Synthase Beta Chain, Chain D, domain 3"/>
    <property type="match status" value="1"/>
</dbReference>
<dbReference type="Gene3D" id="3.40.50.300">
    <property type="entry name" value="P-loop containing nucleotide triphosphate hydrolases"/>
    <property type="match status" value="1"/>
</dbReference>
<dbReference type="HAMAP" id="MF_01347">
    <property type="entry name" value="ATP_synth_beta_bact"/>
    <property type="match status" value="1"/>
</dbReference>
<dbReference type="InterPro" id="IPR003593">
    <property type="entry name" value="AAA+_ATPase"/>
</dbReference>
<dbReference type="InterPro" id="IPR055190">
    <property type="entry name" value="ATP-synt_VA_C"/>
</dbReference>
<dbReference type="InterPro" id="IPR005722">
    <property type="entry name" value="ATP_synth_F1_bsu"/>
</dbReference>
<dbReference type="InterPro" id="IPR020003">
    <property type="entry name" value="ATPase_a/bsu_AS"/>
</dbReference>
<dbReference type="InterPro" id="IPR050053">
    <property type="entry name" value="ATPase_alpha/beta_chains"/>
</dbReference>
<dbReference type="InterPro" id="IPR004100">
    <property type="entry name" value="ATPase_F1/V1/A1_a/bsu_N"/>
</dbReference>
<dbReference type="InterPro" id="IPR036121">
    <property type="entry name" value="ATPase_F1/V1/A1_a/bsu_N_sf"/>
</dbReference>
<dbReference type="InterPro" id="IPR000194">
    <property type="entry name" value="ATPase_F1/V1/A1_a/bsu_nucl-bd"/>
</dbReference>
<dbReference type="InterPro" id="IPR024034">
    <property type="entry name" value="ATPase_F1/V1_b/a_C"/>
</dbReference>
<dbReference type="InterPro" id="IPR027417">
    <property type="entry name" value="P-loop_NTPase"/>
</dbReference>
<dbReference type="NCBIfam" id="TIGR01039">
    <property type="entry name" value="atpD"/>
    <property type="match status" value="1"/>
</dbReference>
<dbReference type="PANTHER" id="PTHR15184">
    <property type="entry name" value="ATP SYNTHASE"/>
    <property type="match status" value="1"/>
</dbReference>
<dbReference type="PANTHER" id="PTHR15184:SF71">
    <property type="entry name" value="ATP SYNTHASE SUBUNIT BETA, MITOCHONDRIAL"/>
    <property type="match status" value="1"/>
</dbReference>
<dbReference type="Pfam" id="PF00006">
    <property type="entry name" value="ATP-synt_ab"/>
    <property type="match status" value="1"/>
</dbReference>
<dbReference type="Pfam" id="PF02874">
    <property type="entry name" value="ATP-synt_ab_N"/>
    <property type="match status" value="1"/>
</dbReference>
<dbReference type="Pfam" id="PF22919">
    <property type="entry name" value="ATP-synt_VA_C"/>
    <property type="match status" value="1"/>
</dbReference>
<dbReference type="SMART" id="SM00382">
    <property type="entry name" value="AAA"/>
    <property type="match status" value="1"/>
</dbReference>
<dbReference type="SUPFAM" id="SSF47917">
    <property type="entry name" value="C-terminal domain of alpha and beta subunits of F1 ATP synthase"/>
    <property type="match status" value="1"/>
</dbReference>
<dbReference type="SUPFAM" id="SSF50615">
    <property type="entry name" value="N-terminal domain of alpha and beta subunits of F1 ATP synthase"/>
    <property type="match status" value="1"/>
</dbReference>
<dbReference type="SUPFAM" id="SSF52540">
    <property type="entry name" value="P-loop containing nucleoside triphosphate hydrolases"/>
    <property type="match status" value="1"/>
</dbReference>
<dbReference type="PROSITE" id="PS00152">
    <property type="entry name" value="ATPASE_ALPHA_BETA"/>
    <property type="match status" value="1"/>
</dbReference>
<feature type="chain" id="PRO_1000166576" description="ATP synthase subunit beta">
    <location>
        <begin position="1"/>
        <end position="465"/>
    </location>
</feature>
<feature type="binding site" evidence="1">
    <location>
        <begin position="155"/>
        <end position="162"/>
    </location>
    <ligand>
        <name>ATP</name>
        <dbReference type="ChEBI" id="CHEBI:30616"/>
    </ligand>
</feature>
<organism>
    <name type="scientific">Buchnera aphidicola subsp. Acyrthosiphon pisum (strain Tuc7)</name>
    <dbReference type="NCBI Taxonomy" id="561501"/>
    <lineage>
        <taxon>Bacteria</taxon>
        <taxon>Pseudomonadati</taxon>
        <taxon>Pseudomonadota</taxon>
        <taxon>Gammaproteobacteria</taxon>
        <taxon>Enterobacterales</taxon>
        <taxon>Erwiniaceae</taxon>
        <taxon>Buchnera</taxon>
    </lineage>
</organism>
<evidence type="ECO:0000255" key="1">
    <source>
        <dbReference type="HAMAP-Rule" id="MF_01347"/>
    </source>
</evidence>
<protein>
    <recommendedName>
        <fullName evidence="1">ATP synthase subunit beta</fullName>
        <ecNumber evidence="1">7.1.2.2</ecNumber>
    </recommendedName>
    <alternativeName>
        <fullName evidence="1">ATP synthase F1 sector subunit beta</fullName>
    </alternativeName>
    <alternativeName>
        <fullName evidence="1">F-ATPase subunit beta</fullName>
    </alternativeName>
</protein>
<accession>B8D6S7</accession>
<gene>
    <name evidence="1" type="primary">atpD</name>
    <name type="ordered locus">BUAPTUC7_008</name>
</gene>
<name>ATPB_BUCAT</name>
<reference key="1">
    <citation type="journal article" date="2009" name="Science">
        <title>The dynamics and time scale of ongoing genomic erosion in symbiotic bacteria.</title>
        <authorList>
            <person name="Moran N.A."/>
            <person name="McLaughlin H.J."/>
            <person name="Sorek R."/>
        </authorList>
    </citation>
    <scope>NUCLEOTIDE SEQUENCE [LARGE SCALE GENOMIC DNA]</scope>
    <source>
        <strain>Tuc7</strain>
    </source>
</reference>
<comment type="function">
    <text evidence="1">Produces ATP from ADP in the presence of a proton gradient across the membrane. The catalytic sites are hosted primarily by the beta subunits.</text>
</comment>
<comment type="catalytic activity">
    <reaction evidence="1">
        <text>ATP + H2O + 4 H(+)(in) = ADP + phosphate + 5 H(+)(out)</text>
        <dbReference type="Rhea" id="RHEA:57720"/>
        <dbReference type="ChEBI" id="CHEBI:15377"/>
        <dbReference type="ChEBI" id="CHEBI:15378"/>
        <dbReference type="ChEBI" id="CHEBI:30616"/>
        <dbReference type="ChEBI" id="CHEBI:43474"/>
        <dbReference type="ChEBI" id="CHEBI:456216"/>
        <dbReference type="EC" id="7.1.2.2"/>
    </reaction>
</comment>
<comment type="subunit">
    <text evidence="1">F-type ATPases have 2 components, CF(1) - the catalytic core - and CF(0) - the membrane proton channel. CF(1) has five subunits: alpha(3), beta(3), gamma(1), delta(1), epsilon(1). CF(0) has three main subunits: a(1), b(2) and c(9-12). The alpha and beta chains form an alternating ring which encloses part of the gamma chain. CF(1) is attached to CF(0) by a central stalk formed by the gamma and epsilon chains, while a peripheral stalk is formed by the delta and b chains.</text>
</comment>
<comment type="subcellular location">
    <subcellularLocation>
        <location evidence="1">Cell membrane</location>
        <topology evidence="1">Peripheral membrane protein</topology>
    </subcellularLocation>
</comment>
<comment type="similarity">
    <text evidence="1">Belongs to the ATPase alpha/beta chains family.</text>
</comment>
<keyword id="KW-0066">ATP synthesis</keyword>
<keyword id="KW-0067">ATP-binding</keyword>
<keyword id="KW-1003">Cell membrane</keyword>
<keyword id="KW-0139">CF(1)</keyword>
<keyword id="KW-0375">Hydrogen ion transport</keyword>
<keyword id="KW-0406">Ion transport</keyword>
<keyword id="KW-0472">Membrane</keyword>
<keyword id="KW-0547">Nucleotide-binding</keyword>
<keyword id="KW-1278">Translocase</keyword>
<keyword id="KW-0813">Transport</keyword>
<proteinExistence type="inferred from homology"/>